<evidence type="ECO:0000250" key="1"/>
<evidence type="ECO:0000255" key="2"/>
<evidence type="ECO:0000255" key="3">
    <source>
        <dbReference type="PROSITE-ProRule" id="PRU00185"/>
    </source>
</evidence>
<evidence type="ECO:0000305" key="4"/>
<evidence type="ECO:0007744" key="5">
    <source>
    </source>
</evidence>
<evidence type="ECO:0007744" key="6">
    <source>
    </source>
</evidence>
<evidence type="ECO:0007744" key="7">
    <source>
    </source>
</evidence>
<gene>
    <name type="primary">GMEB2</name>
    <name type="synonym">KIAA1269</name>
</gene>
<dbReference type="EMBL" id="AF173867">
    <property type="protein sequence ID" value="AAD51351.1"/>
    <property type="molecule type" value="mRNA"/>
</dbReference>
<dbReference type="EMBL" id="AB033095">
    <property type="protein sequence ID" value="BAA86583.1"/>
    <property type="status" value="ALT_INIT"/>
    <property type="molecule type" value="mRNA"/>
</dbReference>
<dbReference type="EMBL" id="AL121907">
    <property type="status" value="NOT_ANNOTATED_CDS"/>
    <property type="molecule type" value="Genomic_DNA"/>
</dbReference>
<dbReference type="EMBL" id="AL353715">
    <property type="status" value="NOT_ANNOTATED_CDS"/>
    <property type="molecule type" value="Genomic_DNA"/>
</dbReference>
<dbReference type="EMBL" id="CH471077">
    <property type="protein sequence ID" value="EAW75253.1"/>
    <property type="molecule type" value="Genomic_DNA"/>
</dbReference>
<dbReference type="EMBL" id="CH471077">
    <property type="protein sequence ID" value="EAW75254.1"/>
    <property type="molecule type" value="Genomic_DNA"/>
</dbReference>
<dbReference type="EMBL" id="BC036305">
    <property type="protein sequence ID" value="AAH36305.1"/>
    <property type="molecule type" value="mRNA"/>
</dbReference>
<dbReference type="EMBL" id="AL133646">
    <property type="protein sequence ID" value="CAB63765.1"/>
    <property type="molecule type" value="mRNA"/>
</dbReference>
<dbReference type="CCDS" id="CCDS13528.1"/>
<dbReference type="RefSeq" id="NP_036516.1">
    <property type="nucleotide sequence ID" value="NM_012384.5"/>
</dbReference>
<dbReference type="RefSeq" id="XP_005260259.1">
    <property type="nucleotide sequence ID" value="XM_005260202.5"/>
</dbReference>
<dbReference type="RefSeq" id="XP_047296061.1">
    <property type="nucleotide sequence ID" value="XM_047440105.1"/>
</dbReference>
<dbReference type="RefSeq" id="XP_047296062.1">
    <property type="nucleotide sequence ID" value="XM_047440106.1"/>
</dbReference>
<dbReference type="RefSeq" id="XP_054179327.1">
    <property type="nucleotide sequence ID" value="XM_054323352.1"/>
</dbReference>
<dbReference type="RefSeq" id="XP_054179328.1">
    <property type="nucleotide sequence ID" value="XM_054323353.1"/>
</dbReference>
<dbReference type="SMR" id="Q9UKD1"/>
<dbReference type="BioGRID" id="117605">
    <property type="interactions" value="55"/>
</dbReference>
<dbReference type="FunCoup" id="Q9UKD1">
    <property type="interactions" value="3685"/>
</dbReference>
<dbReference type="IntAct" id="Q9UKD1">
    <property type="interactions" value="33"/>
</dbReference>
<dbReference type="STRING" id="9606.ENSP00000266068"/>
<dbReference type="GlyConnect" id="2845">
    <property type="glycosylation" value="1 O-GlcNAc glycan (1 site)"/>
</dbReference>
<dbReference type="GlyCosmos" id="Q9UKD1">
    <property type="glycosylation" value="15 sites, 2 glycans"/>
</dbReference>
<dbReference type="GlyGen" id="Q9UKD1">
    <property type="glycosylation" value="15 sites, 2 O-linked glycans (15 sites)"/>
</dbReference>
<dbReference type="iPTMnet" id="Q9UKD1"/>
<dbReference type="PhosphoSitePlus" id="Q9UKD1"/>
<dbReference type="BioMuta" id="GMEB2"/>
<dbReference type="DMDM" id="22001626"/>
<dbReference type="jPOST" id="Q9UKD1"/>
<dbReference type="MassIVE" id="Q9UKD1"/>
<dbReference type="PaxDb" id="9606-ENSP00000266068"/>
<dbReference type="PeptideAtlas" id="Q9UKD1"/>
<dbReference type="ProteomicsDB" id="84767"/>
<dbReference type="Pumba" id="Q9UKD1"/>
<dbReference type="ABCD" id="Q9UKD1">
    <property type="antibodies" value="1 sequenced antibody"/>
</dbReference>
<dbReference type="Antibodypedia" id="1759">
    <property type="antibodies" value="117 antibodies from 23 providers"/>
</dbReference>
<dbReference type="DNASU" id="26205"/>
<dbReference type="Ensembl" id="ENST00000266068.5">
    <property type="protein sequence ID" value="ENSP00000266068.1"/>
    <property type="gene ID" value="ENSG00000101216.11"/>
</dbReference>
<dbReference type="Ensembl" id="ENST00000370077.2">
    <property type="protein sequence ID" value="ENSP00000359094.1"/>
    <property type="gene ID" value="ENSG00000101216.11"/>
</dbReference>
<dbReference type="GeneID" id="26205"/>
<dbReference type="KEGG" id="hsa:26205"/>
<dbReference type="MANE-Select" id="ENST00000370077.2">
    <property type="protein sequence ID" value="ENSP00000359094.1"/>
    <property type="RefSeq nucleotide sequence ID" value="NM_012384.5"/>
    <property type="RefSeq protein sequence ID" value="NP_036516.1"/>
</dbReference>
<dbReference type="UCSC" id="uc002yfp.1">
    <property type="organism name" value="human"/>
</dbReference>
<dbReference type="AGR" id="HGNC:4371"/>
<dbReference type="CTD" id="26205"/>
<dbReference type="DisGeNET" id="26205"/>
<dbReference type="GeneCards" id="GMEB2"/>
<dbReference type="HGNC" id="HGNC:4371">
    <property type="gene designation" value="GMEB2"/>
</dbReference>
<dbReference type="HPA" id="ENSG00000101216">
    <property type="expression patterns" value="Low tissue specificity"/>
</dbReference>
<dbReference type="MIM" id="607451">
    <property type="type" value="gene"/>
</dbReference>
<dbReference type="neXtProt" id="NX_Q9UKD1"/>
<dbReference type="OpenTargets" id="ENSG00000101216"/>
<dbReference type="PharmGKB" id="PA28756"/>
<dbReference type="VEuPathDB" id="HostDB:ENSG00000101216"/>
<dbReference type="eggNOG" id="KOG4333">
    <property type="taxonomic scope" value="Eukaryota"/>
</dbReference>
<dbReference type="GeneTree" id="ENSGT00410000025596"/>
<dbReference type="InParanoid" id="Q9UKD1"/>
<dbReference type="OMA" id="DTFAFWQ"/>
<dbReference type="OrthoDB" id="5792412at2759"/>
<dbReference type="PAN-GO" id="Q9UKD1">
    <property type="GO annotations" value="3 GO annotations based on evolutionary models"/>
</dbReference>
<dbReference type="PhylomeDB" id="Q9UKD1"/>
<dbReference type="TreeFam" id="TF317090"/>
<dbReference type="PathwayCommons" id="Q9UKD1"/>
<dbReference type="SignaLink" id="Q9UKD1"/>
<dbReference type="BioGRID-ORCS" id="26205">
    <property type="hits" value="44 hits in 1177 CRISPR screens"/>
</dbReference>
<dbReference type="ChiTaRS" id="GMEB2">
    <property type="organism name" value="human"/>
</dbReference>
<dbReference type="GeneWiki" id="GMEB2"/>
<dbReference type="GenomeRNAi" id="26205"/>
<dbReference type="Pharos" id="Q9UKD1">
    <property type="development level" value="Tdark"/>
</dbReference>
<dbReference type="PRO" id="PR:Q9UKD1"/>
<dbReference type="Proteomes" id="UP000005640">
    <property type="component" value="Chromosome 20"/>
</dbReference>
<dbReference type="RNAct" id="Q9UKD1">
    <property type="molecule type" value="protein"/>
</dbReference>
<dbReference type="Bgee" id="ENSG00000101216">
    <property type="expression patterns" value="Expressed in parotid gland and 199 other cell types or tissues"/>
</dbReference>
<dbReference type="ExpressionAtlas" id="Q9UKD1">
    <property type="expression patterns" value="baseline and differential"/>
</dbReference>
<dbReference type="GO" id="GO:0000785">
    <property type="term" value="C:chromatin"/>
    <property type="evidence" value="ECO:0000247"/>
    <property type="project" value="NTNU_SB"/>
</dbReference>
<dbReference type="GO" id="GO:0005829">
    <property type="term" value="C:cytosol"/>
    <property type="evidence" value="ECO:0000314"/>
    <property type="project" value="HPA"/>
</dbReference>
<dbReference type="GO" id="GO:0005654">
    <property type="term" value="C:nucleoplasm"/>
    <property type="evidence" value="ECO:0000314"/>
    <property type="project" value="HPA"/>
</dbReference>
<dbReference type="GO" id="GO:0005634">
    <property type="term" value="C:nucleus"/>
    <property type="evidence" value="ECO:0000318"/>
    <property type="project" value="GO_Central"/>
</dbReference>
<dbReference type="GO" id="GO:0000981">
    <property type="term" value="F:DNA-binding transcription factor activity, RNA polymerase II-specific"/>
    <property type="evidence" value="ECO:0000247"/>
    <property type="project" value="NTNU_SB"/>
</dbReference>
<dbReference type="GO" id="GO:0042802">
    <property type="term" value="F:identical protein binding"/>
    <property type="evidence" value="ECO:0000353"/>
    <property type="project" value="IntAct"/>
</dbReference>
<dbReference type="GO" id="GO:0046872">
    <property type="term" value="F:metal ion binding"/>
    <property type="evidence" value="ECO:0007669"/>
    <property type="project" value="UniProtKB-KW"/>
</dbReference>
<dbReference type="GO" id="GO:0000978">
    <property type="term" value="F:RNA polymerase II cis-regulatory region sequence-specific DNA binding"/>
    <property type="evidence" value="ECO:0000318"/>
    <property type="project" value="GO_Central"/>
</dbReference>
<dbReference type="GO" id="GO:1990837">
    <property type="term" value="F:sequence-specific double-stranded DNA binding"/>
    <property type="evidence" value="ECO:0000314"/>
    <property type="project" value="ARUK-UCL"/>
</dbReference>
<dbReference type="GO" id="GO:0006357">
    <property type="term" value="P:regulation of transcription by RNA polymerase II"/>
    <property type="evidence" value="ECO:0000318"/>
    <property type="project" value="GO_Central"/>
</dbReference>
<dbReference type="GO" id="GO:0006366">
    <property type="term" value="P:transcription by RNA polymerase II"/>
    <property type="evidence" value="ECO:0000304"/>
    <property type="project" value="ProtInc"/>
</dbReference>
<dbReference type="FunFam" id="3.10.390.10:FF:000003">
    <property type="entry name" value="glucocorticoid modulatory element-binding protein 1 isoform X2"/>
    <property type="match status" value="1"/>
</dbReference>
<dbReference type="Gene3D" id="3.10.390.10">
    <property type="entry name" value="SAND domain-like"/>
    <property type="match status" value="1"/>
</dbReference>
<dbReference type="InterPro" id="IPR010919">
    <property type="entry name" value="SAND-like_dom_sf"/>
</dbReference>
<dbReference type="InterPro" id="IPR000770">
    <property type="entry name" value="SAND_dom"/>
</dbReference>
<dbReference type="PANTHER" id="PTHR10417">
    <property type="entry name" value="GLUCOCORTICOID MODULATORY ELEMENT-BINDING PROTEIN"/>
    <property type="match status" value="1"/>
</dbReference>
<dbReference type="PANTHER" id="PTHR10417:SF2">
    <property type="entry name" value="GLUCOCORTICOID MODULATORY ELEMENT-BINDING PROTEIN 2"/>
    <property type="match status" value="1"/>
</dbReference>
<dbReference type="Pfam" id="PF01342">
    <property type="entry name" value="SAND"/>
    <property type="match status" value="1"/>
</dbReference>
<dbReference type="SMART" id="SM00258">
    <property type="entry name" value="SAND"/>
    <property type="match status" value="1"/>
</dbReference>
<dbReference type="SUPFAM" id="SSF63763">
    <property type="entry name" value="SAND domain-like"/>
    <property type="match status" value="1"/>
</dbReference>
<dbReference type="PROSITE" id="PS50864">
    <property type="entry name" value="SAND"/>
    <property type="match status" value="1"/>
</dbReference>
<protein>
    <recommendedName>
        <fullName>Glucocorticoid modulatory element-binding protein 2</fullName>
        <shortName>GMEB-2</shortName>
    </recommendedName>
    <alternativeName>
        <fullName>DNA-binding protein p79PIF</fullName>
    </alternativeName>
    <alternativeName>
        <fullName>Parvovirus initiation factor p79</fullName>
        <shortName>PIF p79</shortName>
    </alternativeName>
</protein>
<keyword id="KW-0175">Coiled coil</keyword>
<keyword id="KW-0963">Cytoplasm</keyword>
<keyword id="KW-0903">Direct protein sequencing</keyword>
<keyword id="KW-0238">DNA-binding</keyword>
<keyword id="KW-1017">Isopeptide bond</keyword>
<keyword id="KW-0479">Metal-binding</keyword>
<keyword id="KW-0539">Nucleus</keyword>
<keyword id="KW-0597">Phosphoprotein</keyword>
<keyword id="KW-1267">Proteomics identification</keyword>
<keyword id="KW-1185">Reference proteome</keyword>
<keyword id="KW-0804">Transcription</keyword>
<keyword id="KW-0805">Transcription regulation</keyword>
<keyword id="KW-0832">Ubl conjugation</keyword>
<keyword id="KW-0862">Zinc</keyword>
<name>GMEB2_HUMAN</name>
<comment type="function">
    <text>Trans-acting factor that binds to glucocorticoid modulatory elements (GME) present in the TAT (tyrosine aminotransferase) promoter and increases sensitivity to low concentrations of glucocorticoids. Also binds to the transferrin receptor promoter. Essential auxiliary factor for the replication of parvoviruses.</text>
</comment>
<comment type="subunit">
    <text>Homodimer, and heterodimer of GMEB1 and GMEB2. GMEB1 and GMEB2 form the parvovirus initiator complex (PIF). Interacts with the glucocorticoid receptor (NR3C1). May interact with CREB-binding protein (CBP).</text>
</comment>
<comment type="interaction">
    <interactant intactId="EBI-948296">
        <id>Q9UKD1</id>
    </interactant>
    <interactant intactId="EBI-930964">
        <id>P54253</id>
        <label>ATXN1</label>
    </interactant>
    <organismsDiffer>false</organismsDiffer>
    <experiments>5</experiments>
</comment>
<comment type="interaction">
    <interactant intactId="EBI-948296">
        <id>Q9UKD1</id>
    </interactant>
    <interactant intactId="EBI-374980">
        <id>O00311</id>
        <label>CDC7</label>
    </interactant>
    <organismsDiffer>false</organismsDiffer>
    <experiments>3</experiments>
</comment>
<comment type="interaction">
    <interactant intactId="EBI-948296">
        <id>Q9UKD1</id>
    </interactant>
    <interactant intactId="EBI-741885">
        <id>Q96LK0</id>
        <label>CEP19</label>
    </interactant>
    <organismsDiffer>false</organismsDiffer>
    <experiments>3</experiments>
</comment>
<comment type="interaction">
    <interactant intactId="EBI-948296">
        <id>Q9UKD1</id>
    </interactant>
    <interactant intactId="EBI-701903">
        <id>Q14192</id>
        <label>FHL2</label>
    </interactant>
    <organismsDiffer>false</organismsDiffer>
    <experiments>3</experiments>
</comment>
<comment type="interaction">
    <interactant intactId="EBI-948296">
        <id>Q9UKD1</id>
    </interactant>
    <interactant intactId="EBI-2339665">
        <id>Q9Y692</id>
        <label>GMEB1</label>
    </interactant>
    <organismsDiffer>false</organismsDiffer>
    <experiments>2</experiments>
</comment>
<comment type="interaction">
    <interactant intactId="EBI-948296">
        <id>Q9UKD1</id>
    </interactant>
    <interactant intactId="EBI-948296">
        <id>Q9UKD1</id>
        <label>GMEB2</label>
    </interactant>
    <organismsDiffer>false</organismsDiffer>
    <experiments>3</experiments>
</comment>
<comment type="interaction">
    <interactant intactId="EBI-948296">
        <id>Q9UKD1</id>
    </interactant>
    <interactant intactId="EBI-11959475">
        <id>P25791-3</id>
        <label>LMO2</label>
    </interactant>
    <organismsDiffer>false</organismsDiffer>
    <experiments>6</experiments>
</comment>
<comment type="interaction">
    <interactant intactId="EBI-948296">
        <id>Q9UKD1</id>
    </interactant>
    <interactant intactId="EBI-11742507">
        <id>Q8TAP4-4</id>
        <label>LMO3</label>
    </interactant>
    <organismsDiffer>false</organismsDiffer>
    <experiments>3</experiments>
</comment>
<comment type="interaction">
    <interactant intactId="EBI-948296">
        <id>Q9UKD1</id>
    </interactant>
    <interactant intactId="EBI-2603996">
        <id>Q9BXW4</id>
        <label>MAP1LC3C</label>
    </interactant>
    <organismsDiffer>false</organismsDiffer>
    <experiments>3</experiments>
</comment>
<comment type="interaction">
    <interactant intactId="EBI-948296">
        <id>Q9UKD1</id>
    </interactant>
    <interactant intactId="EBI-748229">
        <id>Q9H8S9</id>
        <label>MOB1A</label>
    </interactant>
    <organismsDiffer>false</organismsDiffer>
    <experiments>3</experiments>
</comment>
<comment type="interaction">
    <interactant intactId="EBI-948296">
        <id>Q9UKD1</id>
    </interactant>
    <interactant intactId="EBI-11721798">
        <id>Q9BRK3</id>
        <label>MXRA8</label>
    </interactant>
    <organismsDiffer>false</organismsDiffer>
    <experiments>3</experiments>
</comment>
<comment type="interaction">
    <interactant intactId="EBI-948296">
        <id>Q9UKD1</id>
    </interactant>
    <interactant intactId="EBI-714158">
        <id>Q13526</id>
        <label>PIN1</label>
    </interactant>
    <organismsDiffer>false</organismsDiffer>
    <experiments>3</experiments>
</comment>
<comment type="interaction">
    <interactant intactId="EBI-948296">
        <id>Q9UKD1</id>
    </interactant>
    <interactant intactId="EBI-1389308">
        <id>Q7Z3K3</id>
        <label>POGZ</label>
    </interactant>
    <organismsDiffer>false</organismsDiffer>
    <experiments>3</experiments>
</comment>
<comment type="interaction">
    <interactant intactId="EBI-948296">
        <id>Q9UKD1</id>
    </interactant>
    <interactant intactId="EBI-12029004">
        <id>P78424</id>
        <label>POU6F2</label>
    </interactant>
    <organismsDiffer>false</organismsDiffer>
    <experiments>3</experiments>
</comment>
<comment type="interaction">
    <interactant intactId="EBI-948296">
        <id>Q9UKD1</id>
    </interactant>
    <interactant intactId="EBI-357631">
        <id>Q13114</id>
        <label>TRAF3</label>
    </interactant>
    <organismsDiffer>false</organismsDiffer>
    <experiments>3</experiments>
</comment>
<comment type="interaction">
    <interactant intactId="EBI-948296">
        <id>Q9UKD1</id>
    </interactant>
    <interactant intactId="EBI-11980463">
        <id>Q9UNY4-2</id>
        <label>TTF2</label>
    </interactant>
    <organismsDiffer>false</organismsDiffer>
    <experiments>3</experiments>
</comment>
<comment type="interaction">
    <interactant intactId="EBI-948296">
        <id>Q9UKD1</id>
    </interactant>
    <interactant intactId="EBI-746595">
        <id>Q96E35</id>
        <label>ZMYND19</label>
    </interactant>
    <organismsDiffer>false</organismsDiffer>
    <experiments>3</experiments>
</comment>
<comment type="subcellular location">
    <subcellularLocation>
        <location>Nucleus</location>
    </subcellularLocation>
    <subcellularLocation>
        <location>Cytoplasm</location>
    </subcellularLocation>
    <text>May be also cytoplasmic.</text>
</comment>
<comment type="tissue specificity">
    <text>Expressed in peripheral blood lymphocytes and fetal liver. Expressed preferentially in reproductive and/or developmentally important cells, such as testis, placenta, bone marrow and fetal tissues.</text>
</comment>
<comment type="sequence caution" evidence="4">
    <conflict type="erroneous initiation">
        <sequence resource="EMBL-CDS" id="BAA86583"/>
    </conflict>
</comment>
<reference key="1">
    <citation type="journal article" date="1999" name="Mol. Cell. Biol.">
        <title>Two new members of the emerging KDWK family of combinatorial transcription modulators bind as a heterodimer to flexibly spaced PuCGPy half-sites.</title>
        <authorList>
            <person name="Christensen J."/>
            <person name="Cotmore S.F."/>
            <person name="Tattersall P."/>
        </authorList>
    </citation>
    <scope>NUCLEOTIDE SEQUENCE [MRNA]</scope>
    <scope>PROTEIN SEQUENCE OF 156-169</scope>
    <source>
        <tissue>Cervix carcinoma</tissue>
    </source>
</reference>
<reference key="2">
    <citation type="journal article" date="1999" name="DNA Res.">
        <title>Prediction of the coding sequences of unidentified human genes. XV. The complete sequences of 100 new cDNA clones from brain which code for large proteins in vitro.</title>
        <authorList>
            <person name="Nagase T."/>
            <person name="Ishikawa K."/>
            <person name="Kikuno R."/>
            <person name="Hirosawa M."/>
            <person name="Nomura N."/>
            <person name="Ohara O."/>
        </authorList>
    </citation>
    <scope>NUCLEOTIDE SEQUENCE [LARGE SCALE MRNA]</scope>
    <source>
        <tissue>Brain</tissue>
    </source>
</reference>
<reference key="3">
    <citation type="journal article" date="2001" name="Nature">
        <title>The DNA sequence and comparative analysis of human chromosome 20.</title>
        <authorList>
            <person name="Deloukas P."/>
            <person name="Matthews L.H."/>
            <person name="Ashurst J.L."/>
            <person name="Burton J."/>
            <person name="Gilbert J.G.R."/>
            <person name="Jones M."/>
            <person name="Stavrides G."/>
            <person name="Almeida J.P."/>
            <person name="Babbage A.K."/>
            <person name="Bagguley C.L."/>
            <person name="Bailey J."/>
            <person name="Barlow K.F."/>
            <person name="Bates K.N."/>
            <person name="Beard L.M."/>
            <person name="Beare D.M."/>
            <person name="Beasley O.P."/>
            <person name="Bird C.P."/>
            <person name="Blakey S.E."/>
            <person name="Bridgeman A.M."/>
            <person name="Brown A.J."/>
            <person name="Buck D."/>
            <person name="Burrill W.D."/>
            <person name="Butler A.P."/>
            <person name="Carder C."/>
            <person name="Carter N.P."/>
            <person name="Chapman J.C."/>
            <person name="Clamp M."/>
            <person name="Clark G."/>
            <person name="Clark L.N."/>
            <person name="Clark S.Y."/>
            <person name="Clee C.M."/>
            <person name="Clegg S."/>
            <person name="Cobley V.E."/>
            <person name="Collier R.E."/>
            <person name="Connor R.E."/>
            <person name="Corby N.R."/>
            <person name="Coulson A."/>
            <person name="Coville G.J."/>
            <person name="Deadman R."/>
            <person name="Dhami P.D."/>
            <person name="Dunn M."/>
            <person name="Ellington A.G."/>
            <person name="Frankland J.A."/>
            <person name="Fraser A."/>
            <person name="French L."/>
            <person name="Garner P."/>
            <person name="Grafham D.V."/>
            <person name="Griffiths C."/>
            <person name="Griffiths M.N.D."/>
            <person name="Gwilliam R."/>
            <person name="Hall R.E."/>
            <person name="Hammond S."/>
            <person name="Harley J.L."/>
            <person name="Heath P.D."/>
            <person name="Ho S."/>
            <person name="Holden J.L."/>
            <person name="Howden P.J."/>
            <person name="Huckle E."/>
            <person name="Hunt A.R."/>
            <person name="Hunt S.E."/>
            <person name="Jekosch K."/>
            <person name="Johnson C.M."/>
            <person name="Johnson D."/>
            <person name="Kay M.P."/>
            <person name="Kimberley A.M."/>
            <person name="King A."/>
            <person name="Knights A."/>
            <person name="Laird G.K."/>
            <person name="Lawlor S."/>
            <person name="Lehvaeslaiho M.H."/>
            <person name="Leversha M.A."/>
            <person name="Lloyd C."/>
            <person name="Lloyd D.M."/>
            <person name="Lovell J.D."/>
            <person name="Marsh V.L."/>
            <person name="Martin S.L."/>
            <person name="McConnachie L.J."/>
            <person name="McLay K."/>
            <person name="McMurray A.A."/>
            <person name="Milne S.A."/>
            <person name="Mistry D."/>
            <person name="Moore M.J.F."/>
            <person name="Mullikin J.C."/>
            <person name="Nickerson T."/>
            <person name="Oliver K."/>
            <person name="Parker A."/>
            <person name="Patel R."/>
            <person name="Pearce T.A.V."/>
            <person name="Peck A.I."/>
            <person name="Phillimore B.J.C.T."/>
            <person name="Prathalingam S.R."/>
            <person name="Plumb R.W."/>
            <person name="Ramsay H."/>
            <person name="Rice C.M."/>
            <person name="Ross M.T."/>
            <person name="Scott C.E."/>
            <person name="Sehra H.K."/>
            <person name="Shownkeen R."/>
            <person name="Sims S."/>
            <person name="Skuce C.D."/>
            <person name="Smith M.L."/>
            <person name="Soderlund C."/>
            <person name="Steward C.A."/>
            <person name="Sulston J.E."/>
            <person name="Swann R.M."/>
            <person name="Sycamore N."/>
            <person name="Taylor R."/>
            <person name="Tee L."/>
            <person name="Thomas D.W."/>
            <person name="Thorpe A."/>
            <person name="Tracey A."/>
            <person name="Tromans A.C."/>
            <person name="Vaudin M."/>
            <person name="Wall M."/>
            <person name="Wallis J.M."/>
            <person name="Whitehead S.L."/>
            <person name="Whittaker P."/>
            <person name="Willey D.L."/>
            <person name="Williams L."/>
            <person name="Williams S.A."/>
            <person name="Wilming L."/>
            <person name="Wray P.W."/>
            <person name="Hubbard T."/>
            <person name="Durbin R.M."/>
            <person name="Bentley D.R."/>
            <person name="Beck S."/>
            <person name="Rogers J."/>
        </authorList>
    </citation>
    <scope>NUCLEOTIDE SEQUENCE [LARGE SCALE GENOMIC DNA]</scope>
</reference>
<reference key="4">
    <citation type="submission" date="2005-09" db="EMBL/GenBank/DDBJ databases">
        <authorList>
            <person name="Mural R.J."/>
            <person name="Istrail S."/>
            <person name="Sutton G.G."/>
            <person name="Florea L."/>
            <person name="Halpern A.L."/>
            <person name="Mobarry C.M."/>
            <person name="Lippert R."/>
            <person name="Walenz B."/>
            <person name="Shatkay H."/>
            <person name="Dew I."/>
            <person name="Miller J.R."/>
            <person name="Flanigan M.J."/>
            <person name="Edwards N.J."/>
            <person name="Bolanos R."/>
            <person name="Fasulo D."/>
            <person name="Halldorsson B.V."/>
            <person name="Hannenhalli S."/>
            <person name="Turner R."/>
            <person name="Yooseph S."/>
            <person name="Lu F."/>
            <person name="Nusskern D.R."/>
            <person name="Shue B.C."/>
            <person name="Zheng X.H."/>
            <person name="Zhong F."/>
            <person name="Delcher A.L."/>
            <person name="Huson D.H."/>
            <person name="Kravitz S.A."/>
            <person name="Mouchard L."/>
            <person name="Reinert K."/>
            <person name="Remington K.A."/>
            <person name="Clark A.G."/>
            <person name="Waterman M.S."/>
            <person name="Eichler E.E."/>
            <person name="Adams M.D."/>
            <person name="Hunkapiller M.W."/>
            <person name="Myers E.W."/>
            <person name="Venter J.C."/>
        </authorList>
    </citation>
    <scope>NUCLEOTIDE SEQUENCE [LARGE SCALE GENOMIC DNA]</scope>
</reference>
<reference key="5">
    <citation type="journal article" date="2004" name="Genome Res.">
        <title>The status, quality, and expansion of the NIH full-length cDNA project: the Mammalian Gene Collection (MGC).</title>
        <authorList>
            <consortium name="The MGC Project Team"/>
        </authorList>
    </citation>
    <scope>NUCLEOTIDE SEQUENCE [LARGE SCALE MRNA]</scope>
    <source>
        <tissue>Brain</tissue>
    </source>
</reference>
<reference key="6">
    <citation type="journal article" date="2007" name="BMC Genomics">
        <title>The full-ORF clone resource of the German cDNA consortium.</title>
        <authorList>
            <person name="Bechtel S."/>
            <person name="Rosenfelder H."/>
            <person name="Duda A."/>
            <person name="Schmidt C.P."/>
            <person name="Ernst U."/>
            <person name="Wellenreuther R."/>
            <person name="Mehrle A."/>
            <person name="Schuster C."/>
            <person name="Bahr A."/>
            <person name="Bloecker H."/>
            <person name="Heubner D."/>
            <person name="Hoerlein A."/>
            <person name="Michel G."/>
            <person name="Wedler H."/>
            <person name="Koehrer K."/>
            <person name="Ottenwaelder B."/>
            <person name="Poustka A."/>
            <person name="Wiemann S."/>
            <person name="Schupp I."/>
        </authorList>
    </citation>
    <scope>NUCLEOTIDE SEQUENCE [LARGE SCALE MRNA] OF 24-530</scope>
    <source>
        <tissue>Testis</tissue>
    </source>
</reference>
<reference key="7">
    <citation type="journal article" date="2009" name="Sci. Signal.">
        <title>Quantitative phosphoproteomic analysis of T cell receptor signaling reveals system-wide modulation of protein-protein interactions.</title>
        <authorList>
            <person name="Mayya V."/>
            <person name="Lundgren D.H."/>
            <person name="Hwang S.-I."/>
            <person name="Rezaul K."/>
            <person name="Wu L."/>
            <person name="Eng J.K."/>
            <person name="Rodionov V."/>
            <person name="Han D.K."/>
        </authorList>
    </citation>
    <scope>PHOSPHORYLATION [LARGE SCALE ANALYSIS] AT SER-373</scope>
    <scope>IDENTIFICATION BY MASS SPECTROMETRY [LARGE SCALE ANALYSIS]</scope>
    <source>
        <tissue>Leukemic T-cell</tissue>
    </source>
</reference>
<reference key="8">
    <citation type="journal article" date="2014" name="J. Proteomics">
        <title>An enzyme assisted RP-RPLC approach for in-depth analysis of human liver phosphoproteome.</title>
        <authorList>
            <person name="Bian Y."/>
            <person name="Song C."/>
            <person name="Cheng K."/>
            <person name="Dong M."/>
            <person name="Wang F."/>
            <person name="Huang J."/>
            <person name="Sun D."/>
            <person name="Wang L."/>
            <person name="Ye M."/>
            <person name="Zou H."/>
        </authorList>
    </citation>
    <scope>IDENTIFICATION BY MASS SPECTROMETRY [LARGE SCALE ANALYSIS]</scope>
    <source>
        <tissue>Liver</tissue>
    </source>
</reference>
<reference key="9">
    <citation type="journal article" date="2014" name="Proc. Natl. Acad. Sci. U.S.A.">
        <title>Mapping of SUMO sites and analysis of SUMOylation changes induced by external stimuli.</title>
        <authorList>
            <person name="Impens F."/>
            <person name="Radoshevich L."/>
            <person name="Cossart P."/>
            <person name="Ribet D."/>
        </authorList>
    </citation>
    <scope>SUMOYLATION [LARGE SCALE ANALYSIS] AT LYS-155</scope>
    <scope>IDENTIFICATION BY MASS SPECTROMETRY [LARGE SCALE ANALYSIS]</scope>
</reference>
<reference key="10">
    <citation type="journal article" date="2017" name="Nat. Struct. Mol. Biol.">
        <title>Site-specific mapping of the human SUMO proteome reveals co-modification with phosphorylation.</title>
        <authorList>
            <person name="Hendriks I.A."/>
            <person name="Lyon D."/>
            <person name="Young C."/>
            <person name="Jensen L.J."/>
            <person name="Vertegaal A.C."/>
            <person name="Nielsen M.L."/>
        </authorList>
    </citation>
    <scope>SUMOYLATION [LARGE SCALE ANALYSIS] AT LYS-155</scope>
    <scope>IDENTIFICATION BY MASS SPECTROMETRY [LARGE SCALE ANALYSIS]</scope>
</reference>
<feature type="chain" id="PRO_0000074092" description="Glucocorticoid modulatory element-binding protein 2">
    <location>
        <begin position="1"/>
        <end position="530"/>
    </location>
</feature>
<feature type="domain" description="SAND" evidence="3">
    <location>
        <begin position="81"/>
        <end position="163"/>
    </location>
</feature>
<feature type="coiled-coil region" evidence="2">
    <location>
        <begin position="304"/>
        <end position="348"/>
    </location>
</feature>
<feature type="binding site" evidence="1">
    <location>
        <position position="110"/>
    </location>
    <ligand>
        <name>Zn(2+)</name>
        <dbReference type="ChEBI" id="CHEBI:29105"/>
    </ligand>
</feature>
<feature type="binding site" evidence="1">
    <location>
        <position position="136"/>
    </location>
    <ligand>
        <name>DNA</name>
        <dbReference type="ChEBI" id="CHEBI:16991"/>
    </ligand>
</feature>
<feature type="binding site" evidence="1">
    <location>
        <position position="140"/>
    </location>
    <ligand>
        <name>DNA</name>
        <dbReference type="ChEBI" id="CHEBI:16991"/>
    </ligand>
</feature>
<feature type="binding site" evidence="1">
    <location>
        <position position="143"/>
    </location>
    <ligand>
        <name>DNA</name>
        <dbReference type="ChEBI" id="CHEBI:16991"/>
    </ligand>
</feature>
<feature type="binding site" evidence="1">
    <location>
        <position position="154"/>
    </location>
    <ligand>
        <name>DNA</name>
        <dbReference type="ChEBI" id="CHEBI:16991"/>
    </ligand>
</feature>
<feature type="binding site" evidence="1">
    <location>
        <position position="167"/>
    </location>
    <ligand>
        <name>Zn(2+)</name>
        <dbReference type="ChEBI" id="CHEBI:29105"/>
    </ligand>
</feature>
<feature type="binding site" evidence="1">
    <location>
        <position position="171"/>
    </location>
    <ligand>
        <name>Zn(2+)</name>
        <dbReference type="ChEBI" id="CHEBI:29105"/>
    </ligand>
</feature>
<feature type="binding site" evidence="1">
    <location>
        <position position="175"/>
    </location>
    <ligand>
        <name>Zn(2+)</name>
        <dbReference type="ChEBI" id="CHEBI:29105"/>
    </ligand>
</feature>
<feature type="modified residue" description="Phosphoserine" evidence="5">
    <location>
        <position position="373"/>
    </location>
</feature>
<feature type="cross-link" description="Glycyl lysine isopeptide (Lys-Gly) (interchain with G-Cter in SUMO1); alternate" evidence="6">
    <location>
        <position position="155"/>
    </location>
</feature>
<feature type="cross-link" description="Glycyl lysine isopeptide (Lys-Gly) (interchain with G-Cter in SUMO2); alternate" evidence="7">
    <location>
        <position position="155"/>
    </location>
</feature>
<feature type="sequence conflict" description="In Ref. 6." evidence="4" ref="6">
    <original>DGSGVEGVKTVLVTTNLAPHG</original>
    <variation>CPAGCALRDPDSILSSLHFTR</variation>
    <location>
        <begin position="24"/>
        <end position="44"/>
    </location>
</feature>
<feature type="sequence conflict" description="In Ref. 6." evidence="4" ref="6">
    <location>
        <begin position="77"/>
        <end position="78"/>
    </location>
</feature>
<feature type="sequence conflict" description="In Ref. 2; BAA86583." evidence="4" ref="2">
    <original>QL</original>
    <variation>PV</variation>
    <location>
        <begin position="381"/>
        <end position="382"/>
    </location>
</feature>
<accession>Q9UKD1</accession>
<accession>E1P5J3</accession>
<accession>Q5TDS0</accession>
<accession>Q9H431</accession>
<accession>Q9H4X7</accession>
<accession>Q9H4X8</accession>
<accession>Q9UF78</accession>
<accession>Q9ULF1</accession>
<organism>
    <name type="scientific">Homo sapiens</name>
    <name type="common">Human</name>
    <dbReference type="NCBI Taxonomy" id="9606"/>
    <lineage>
        <taxon>Eukaryota</taxon>
        <taxon>Metazoa</taxon>
        <taxon>Chordata</taxon>
        <taxon>Craniata</taxon>
        <taxon>Vertebrata</taxon>
        <taxon>Euteleostomi</taxon>
        <taxon>Mammalia</taxon>
        <taxon>Eutheria</taxon>
        <taxon>Euarchontoglires</taxon>
        <taxon>Primates</taxon>
        <taxon>Haplorrhini</taxon>
        <taxon>Catarrhini</taxon>
        <taxon>Hominidae</taxon>
        <taxon>Homo</taxon>
    </lineage>
</organism>
<sequence length="530" mass="56421">MATPDVSVHMEEVVVVTTPDTAVDGSGVEGVKTVLVTTNLAPHGGDLTEDNMETENAAAAAAAAFTASSQLKEAVLVKMAEEGENLEAEIVYPITCGDSRANLIWRKFVCPGINVKCVQYDEHVISPKEFVHLAGKSTLKDWKRAIRMNGIMLRKIMDSGELDFYQHDKVCSNTCRSTKIDLSGARVSLSSPTSAEYIPLTPAAADVNGSPATITIETCEDPGDWTAAIGDDTFTFWRGLKDAGLLDEVIQEFHQELVETMRGLQQRVQDPPLQLRDAVLLNNIVQNFGMLDLVKKVLASHKCQMDRSREQYARDLAALEQQCDEHRRRAKELKHKSQHLSNVLMTLTPVSLPPPVKRPRLARATSGPAAMASQVLTQSAQLALGPGVPVPQLTSVPLGKVVSTLPSTVLGKGSLQAPPASSPASPLLGGYTVLASSGSTYPSTVEIHPDASSLTVLSTAAVQDGSTVFKVVSPLQLLTLPGLGPTLQNVAQASPGSSTIVTVPAGAAPGPEEHTATIEVAAMAEDHERK</sequence>
<proteinExistence type="evidence at protein level"/>